<evidence type="ECO:0000255" key="1">
    <source>
        <dbReference type="HAMAP-Rule" id="MF_01369"/>
    </source>
</evidence>
<evidence type="ECO:0000305" key="2"/>
<name>RL23_PROM2</name>
<accession>A8G760</accession>
<sequence length="100" mass="11266">MTKLFDSRLADVIRKPVITEKATNALDLNQYTFEVDHRAAKPEIKAAIEALFSVKVIGVNTMNPPRRTRRVGKFSGKRSQVKKAIVRLAEGDKIQLFPES</sequence>
<dbReference type="EMBL" id="CP000825">
    <property type="protein sequence ID" value="ABV51441.1"/>
    <property type="molecule type" value="Genomic_DNA"/>
</dbReference>
<dbReference type="RefSeq" id="WP_012008447.1">
    <property type="nucleotide sequence ID" value="NC_009840.1"/>
</dbReference>
<dbReference type="SMR" id="A8G760"/>
<dbReference type="STRING" id="93060.P9215_18281"/>
<dbReference type="KEGG" id="pmh:P9215_18281"/>
<dbReference type="eggNOG" id="COG0089">
    <property type="taxonomic scope" value="Bacteria"/>
</dbReference>
<dbReference type="HOGENOM" id="CLU_037562_3_2_3"/>
<dbReference type="OrthoDB" id="9793353at2"/>
<dbReference type="Proteomes" id="UP000002014">
    <property type="component" value="Chromosome"/>
</dbReference>
<dbReference type="GO" id="GO:1990904">
    <property type="term" value="C:ribonucleoprotein complex"/>
    <property type="evidence" value="ECO:0007669"/>
    <property type="project" value="UniProtKB-KW"/>
</dbReference>
<dbReference type="GO" id="GO:0005840">
    <property type="term" value="C:ribosome"/>
    <property type="evidence" value="ECO:0007669"/>
    <property type="project" value="UniProtKB-KW"/>
</dbReference>
<dbReference type="GO" id="GO:0019843">
    <property type="term" value="F:rRNA binding"/>
    <property type="evidence" value="ECO:0007669"/>
    <property type="project" value="UniProtKB-UniRule"/>
</dbReference>
<dbReference type="GO" id="GO:0003735">
    <property type="term" value="F:structural constituent of ribosome"/>
    <property type="evidence" value="ECO:0007669"/>
    <property type="project" value="InterPro"/>
</dbReference>
<dbReference type="GO" id="GO:0006412">
    <property type="term" value="P:translation"/>
    <property type="evidence" value="ECO:0007669"/>
    <property type="project" value="UniProtKB-UniRule"/>
</dbReference>
<dbReference type="FunFam" id="3.30.70.330:FF:000001">
    <property type="entry name" value="50S ribosomal protein L23"/>
    <property type="match status" value="1"/>
</dbReference>
<dbReference type="Gene3D" id="3.30.70.330">
    <property type="match status" value="1"/>
</dbReference>
<dbReference type="HAMAP" id="MF_01369_B">
    <property type="entry name" value="Ribosomal_uL23_B"/>
    <property type="match status" value="1"/>
</dbReference>
<dbReference type="InterPro" id="IPR012677">
    <property type="entry name" value="Nucleotide-bd_a/b_plait_sf"/>
</dbReference>
<dbReference type="InterPro" id="IPR013025">
    <property type="entry name" value="Ribosomal_uL23-like"/>
</dbReference>
<dbReference type="InterPro" id="IPR012678">
    <property type="entry name" value="Ribosomal_uL23/eL15/eS24_sf"/>
</dbReference>
<dbReference type="InterPro" id="IPR001014">
    <property type="entry name" value="Ribosomal_uL23_CS"/>
</dbReference>
<dbReference type="NCBIfam" id="NF004359">
    <property type="entry name" value="PRK05738.1-3"/>
    <property type="match status" value="1"/>
</dbReference>
<dbReference type="NCBIfam" id="NF004363">
    <property type="entry name" value="PRK05738.2-4"/>
    <property type="match status" value="1"/>
</dbReference>
<dbReference type="NCBIfam" id="NF004365">
    <property type="entry name" value="PRK05738.3-1"/>
    <property type="match status" value="1"/>
</dbReference>
<dbReference type="NCBIfam" id="NF004366">
    <property type="entry name" value="PRK05738.3-2"/>
    <property type="match status" value="1"/>
</dbReference>
<dbReference type="NCBIfam" id="NF004368">
    <property type="entry name" value="PRK05738.3-4"/>
    <property type="match status" value="1"/>
</dbReference>
<dbReference type="PANTHER" id="PTHR11620">
    <property type="entry name" value="60S RIBOSOMAL PROTEIN L23A"/>
    <property type="match status" value="1"/>
</dbReference>
<dbReference type="Pfam" id="PF00276">
    <property type="entry name" value="Ribosomal_L23"/>
    <property type="match status" value="1"/>
</dbReference>
<dbReference type="SUPFAM" id="SSF54189">
    <property type="entry name" value="Ribosomal proteins S24e, L23 and L15e"/>
    <property type="match status" value="1"/>
</dbReference>
<dbReference type="PROSITE" id="PS00050">
    <property type="entry name" value="RIBOSOMAL_L23"/>
    <property type="match status" value="1"/>
</dbReference>
<protein>
    <recommendedName>
        <fullName evidence="1">Large ribosomal subunit protein uL23</fullName>
    </recommendedName>
    <alternativeName>
        <fullName evidence="2">50S ribosomal protein L23</fullName>
    </alternativeName>
</protein>
<gene>
    <name evidence="1" type="primary">rplW</name>
    <name evidence="1" type="synonym">rpl23</name>
    <name type="ordered locus">P9215_18281</name>
</gene>
<organism>
    <name type="scientific">Prochlorococcus marinus (strain MIT 9215)</name>
    <dbReference type="NCBI Taxonomy" id="93060"/>
    <lineage>
        <taxon>Bacteria</taxon>
        <taxon>Bacillati</taxon>
        <taxon>Cyanobacteriota</taxon>
        <taxon>Cyanophyceae</taxon>
        <taxon>Synechococcales</taxon>
        <taxon>Prochlorococcaceae</taxon>
        <taxon>Prochlorococcus</taxon>
    </lineage>
</organism>
<feature type="chain" id="PRO_1000068134" description="Large ribosomal subunit protein uL23">
    <location>
        <begin position="1"/>
        <end position="100"/>
    </location>
</feature>
<reference key="1">
    <citation type="journal article" date="2007" name="PLoS Genet.">
        <title>Patterns and implications of gene gain and loss in the evolution of Prochlorococcus.</title>
        <authorList>
            <person name="Kettler G.C."/>
            <person name="Martiny A.C."/>
            <person name="Huang K."/>
            <person name="Zucker J."/>
            <person name="Coleman M.L."/>
            <person name="Rodrigue S."/>
            <person name="Chen F."/>
            <person name="Lapidus A."/>
            <person name="Ferriera S."/>
            <person name="Johnson J."/>
            <person name="Steglich C."/>
            <person name="Church G.M."/>
            <person name="Richardson P."/>
            <person name="Chisholm S.W."/>
        </authorList>
    </citation>
    <scope>NUCLEOTIDE SEQUENCE [LARGE SCALE GENOMIC DNA]</scope>
    <source>
        <strain>MIT 9215</strain>
    </source>
</reference>
<keyword id="KW-0687">Ribonucleoprotein</keyword>
<keyword id="KW-0689">Ribosomal protein</keyword>
<keyword id="KW-0694">RNA-binding</keyword>
<keyword id="KW-0699">rRNA-binding</keyword>
<proteinExistence type="inferred from homology"/>
<comment type="function">
    <text evidence="1">One of the early assembly proteins it binds 23S rRNA. One of the proteins that surrounds the polypeptide exit tunnel on the outside of the ribosome. Forms the main docking site for trigger factor binding to the ribosome.</text>
</comment>
<comment type="subunit">
    <text evidence="1">Part of the 50S ribosomal subunit. Contacts protein L29, and trigger factor when it is bound to the ribosome.</text>
</comment>
<comment type="similarity">
    <text evidence="1">Belongs to the universal ribosomal protein uL23 family.</text>
</comment>